<sequence>MDKRGRKELRSIRRAKRTKIEPEADAGVESSGSVLEAGPAVEEKVQDDGEKEDDKEQVYNALLTILKSEHKEDKVKTHRDHDEEESEAEEEEQAEDQYNDAFADGESDDEDDDEDEQAQEQEEIESDDEEKDPFDTHFNGEEAAKHGEALGNALKDNKLRYKSIKLKVGSADEDQVQEDAIFSVPYIEGETPKIEDPKLKCSLSSYFLKKRLRIQNNLLDTESNALTDLQRKIVDPMMQYKDILYEYDTYGKDEDEYRDLYTLHVLNHVYKTRDKIIKNNQKLQDNPDSEFLDQGFTRPKVLIIAPTRDSAYQIVTKLIEKSGLDQVDKKGKFRDQFYDPSFPPSSKPKSFQHIFKGNTNDYFVLGVKFTRKAIKLYSNFYQSDIIVCSPLGLQMIVENTDKKKRQDDFLSSVEVTIIDQFHSIEYQNYTHLFTIFDHLNKIPQEQHDADFSRIRMWYINDQAKFFRQTMIFTKYISPVANSLLNIKCRNLEGRWKNHKIVSSEDSSVGTVGLKVRQIFQRFNVLGNSVADEPDYRFKFFTSVVISNITKSTGYDDGTLIYIPEYSDYVRVRNYMKEKTSILFGDINEYSEQRSLTSNRTLFNQGRLKVLLYTERLHHFRRYELKGVKNVVFYKPPSDPEFYKEVVRYIGKTVFLGDADLNISTVRCCYSKLDGLALEKIVGTKRTGVLTHGQNETYEFK</sequence>
<proteinExistence type="inferred from homology"/>
<gene>
    <name type="primary">UTP25</name>
    <name type="ordered locus">CAGL0D04180g</name>
</gene>
<organism>
    <name type="scientific">Candida glabrata (strain ATCC 2001 / BCRC 20586 / JCM 3761 / NBRC 0622 / NRRL Y-65 / CBS 138)</name>
    <name type="common">Yeast</name>
    <name type="synonym">Nakaseomyces glabratus</name>
    <dbReference type="NCBI Taxonomy" id="284593"/>
    <lineage>
        <taxon>Eukaryota</taxon>
        <taxon>Fungi</taxon>
        <taxon>Dikarya</taxon>
        <taxon>Ascomycota</taxon>
        <taxon>Saccharomycotina</taxon>
        <taxon>Saccharomycetes</taxon>
        <taxon>Saccharomycetales</taxon>
        <taxon>Saccharomycetaceae</taxon>
        <taxon>Nakaseomyces</taxon>
    </lineage>
</organism>
<feature type="chain" id="PRO_0000408110" description="U3 small nucleolar RNA-associated protein 25">
    <location>
        <begin position="1"/>
        <end position="700"/>
    </location>
</feature>
<feature type="region of interest" description="Disordered" evidence="2">
    <location>
        <begin position="1"/>
        <end position="139"/>
    </location>
</feature>
<feature type="compositionally biased region" description="Basic and acidic residues" evidence="2">
    <location>
        <begin position="1"/>
        <end position="11"/>
    </location>
</feature>
<feature type="compositionally biased region" description="Basic and acidic residues" evidence="2">
    <location>
        <begin position="41"/>
        <end position="57"/>
    </location>
</feature>
<feature type="compositionally biased region" description="Basic and acidic residues" evidence="2">
    <location>
        <begin position="67"/>
        <end position="81"/>
    </location>
</feature>
<feature type="compositionally biased region" description="Acidic residues" evidence="2">
    <location>
        <begin position="82"/>
        <end position="132"/>
    </location>
</feature>
<accession>Q6FVZ6</accession>
<reference key="1">
    <citation type="journal article" date="2004" name="Nature">
        <title>Genome evolution in yeasts.</title>
        <authorList>
            <person name="Dujon B."/>
            <person name="Sherman D."/>
            <person name="Fischer G."/>
            <person name="Durrens P."/>
            <person name="Casaregola S."/>
            <person name="Lafontaine I."/>
            <person name="de Montigny J."/>
            <person name="Marck C."/>
            <person name="Neuveglise C."/>
            <person name="Talla E."/>
            <person name="Goffard N."/>
            <person name="Frangeul L."/>
            <person name="Aigle M."/>
            <person name="Anthouard V."/>
            <person name="Babour A."/>
            <person name="Barbe V."/>
            <person name="Barnay S."/>
            <person name="Blanchin S."/>
            <person name="Beckerich J.-M."/>
            <person name="Beyne E."/>
            <person name="Bleykasten C."/>
            <person name="Boisrame A."/>
            <person name="Boyer J."/>
            <person name="Cattolico L."/>
            <person name="Confanioleri F."/>
            <person name="de Daruvar A."/>
            <person name="Despons L."/>
            <person name="Fabre E."/>
            <person name="Fairhead C."/>
            <person name="Ferry-Dumazet H."/>
            <person name="Groppi A."/>
            <person name="Hantraye F."/>
            <person name="Hennequin C."/>
            <person name="Jauniaux N."/>
            <person name="Joyet P."/>
            <person name="Kachouri R."/>
            <person name="Kerrest A."/>
            <person name="Koszul R."/>
            <person name="Lemaire M."/>
            <person name="Lesur I."/>
            <person name="Ma L."/>
            <person name="Muller H."/>
            <person name="Nicaud J.-M."/>
            <person name="Nikolski M."/>
            <person name="Oztas S."/>
            <person name="Ozier-Kalogeropoulos O."/>
            <person name="Pellenz S."/>
            <person name="Potier S."/>
            <person name="Richard G.-F."/>
            <person name="Straub M.-L."/>
            <person name="Suleau A."/>
            <person name="Swennen D."/>
            <person name="Tekaia F."/>
            <person name="Wesolowski-Louvel M."/>
            <person name="Westhof E."/>
            <person name="Wirth B."/>
            <person name="Zeniou-Meyer M."/>
            <person name="Zivanovic Y."/>
            <person name="Bolotin-Fukuhara M."/>
            <person name="Thierry A."/>
            <person name="Bouchier C."/>
            <person name="Caudron B."/>
            <person name="Scarpelli C."/>
            <person name="Gaillardin C."/>
            <person name="Weissenbach J."/>
            <person name="Wincker P."/>
            <person name="Souciet J.-L."/>
        </authorList>
    </citation>
    <scope>NUCLEOTIDE SEQUENCE [LARGE SCALE GENOMIC DNA]</scope>
    <source>
        <strain>ATCC 2001 / BCRC 20586 / JCM 3761 / NBRC 0622 / NRRL Y-65 / CBS 138</strain>
    </source>
</reference>
<protein>
    <recommendedName>
        <fullName>U3 small nucleolar RNA-associated protein 25</fullName>
        <shortName>U3 snoRNA-associated protein 25</shortName>
    </recommendedName>
    <alternativeName>
        <fullName>U three protein 25</fullName>
    </alternativeName>
</protein>
<dbReference type="EMBL" id="CR380950">
    <property type="protein sequence ID" value="CAG58509.1"/>
    <property type="molecule type" value="Genomic_DNA"/>
</dbReference>
<dbReference type="RefSeq" id="XP_445598.1">
    <property type="nucleotide sequence ID" value="XM_445598.1"/>
</dbReference>
<dbReference type="FunCoup" id="Q6FVZ6">
    <property type="interactions" value="1339"/>
</dbReference>
<dbReference type="STRING" id="284593.Q6FVZ6"/>
<dbReference type="EnsemblFungi" id="CAGL0D04180g-T">
    <property type="protein sequence ID" value="CAGL0D04180g-T-p1"/>
    <property type="gene ID" value="CAGL0D04180g"/>
</dbReference>
<dbReference type="KEGG" id="cgr:2887158"/>
<dbReference type="CGD" id="CAL0128371">
    <property type="gene designation" value="CAGL0D04180g"/>
</dbReference>
<dbReference type="VEuPathDB" id="FungiDB:CAGL0D04180g"/>
<dbReference type="eggNOG" id="KOG2340">
    <property type="taxonomic scope" value="Eukaryota"/>
</dbReference>
<dbReference type="HOGENOM" id="CLU_018705_0_1_1"/>
<dbReference type="InParanoid" id="Q6FVZ6"/>
<dbReference type="OMA" id="GIMIFIP"/>
<dbReference type="Proteomes" id="UP000002428">
    <property type="component" value="Chromosome D"/>
</dbReference>
<dbReference type="GO" id="GO:0005730">
    <property type="term" value="C:nucleolus"/>
    <property type="evidence" value="ECO:0007669"/>
    <property type="project" value="UniProtKB-SubCell"/>
</dbReference>
<dbReference type="GO" id="GO:0032040">
    <property type="term" value="C:small-subunit processome"/>
    <property type="evidence" value="ECO:0007669"/>
    <property type="project" value="TreeGrafter"/>
</dbReference>
<dbReference type="GO" id="GO:0019843">
    <property type="term" value="F:rRNA binding"/>
    <property type="evidence" value="ECO:0007669"/>
    <property type="project" value="TreeGrafter"/>
</dbReference>
<dbReference type="GO" id="GO:0034511">
    <property type="term" value="F:U3 snoRNA binding"/>
    <property type="evidence" value="ECO:0007669"/>
    <property type="project" value="InterPro"/>
</dbReference>
<dbReference type="GO" id="GO:0000462">
    <property type="term" value="P:maturation of SSU-rRNA from tricistronic rRNA transcript (SSU-rRNA, 5.8S rRNA, LSU-rRNA)"/>
    <property type="evidence" value="ECO:0007669"/>
    <property type="project" value="TreeGrafter"/>
</dbReference>
<dbReference type="Gene3D" id="3.40.50.300">
    <property type="entry name" value="P-loop containing nucleotide triphosphate hydrolases"/>
    <property type="match status" value="1"/>
</dbReference>
<dbReference type="InterPro" id="IPR027417">
    <property type="entry name" value="P-loop_NTPase"/>
</dbReference>
<dbReference type="InterPro" id="IPR010678">
    <property type="entry name" value="UTP25"/>
</dbReference>
<dbReference type="InterPro" id="IPR053939">
    <property type="entry name" value="UTP25_C"/>
</dbReference>
<dbReference type="InterPro" id="IPR053940">
    <property type="entry name" value="UTP25_NTPase-like"/>
</dbReference>
<dbReference type="PANTHER" id="PTHR12933">
    <property type="entry name" value="ORF PROTEIN-RELATED"/>
    <property type="match status" value="1"/>
</dbReference>
<dbReference type="PANTHER" id="PTHR12933:SF0">
    <property type="entry name" value="U3 SMALL NUCLEOLAR RNA-ASSOCIATED PROTEIN 25 HOMOLOG"/>
    <property type="match status" value="1"/>
</dbReference>
<dbReference type="Pfam" id="PF06862">
    <property type="entry name" value="Utp25_C"/>
    <property type="match status" value="1"/>
</dbReference>
<dbReference type="Pfam" id="PF22916">
    <property type="entry name" value="UTP25_NTPase-like"/>
    <property type="match status" value="1"/>
</dbReference>
<dbReference type="SUPFAM" id="SSF52540">
    <property type="entry name" value="P-loop containing nucleoside triphosphate hydrolases"/>
    <property type="match status" value="1"/>
</dbReference>
<evidence type="ECO:0000250" key="1"/>
<evidence type="ECO:0000256" key="2">
    <source>
        <dbReference type="SAM" id="MobiDB-lite"/>
    </source>
</evidence>
<evidence type="ECO:0000305" key="3"/>
<comment type="function">
    <text evidence="1">DEAD-box RNA helicase-like protein required for pre-18S rRNA processing, specifically at sites A0, A1, and A2.</text>
</comment>
<comment type="subunit">
    <text evidence="1">Component of the ribosomal small subunit (SSU) processome composed of at least 40 protein subunits and snoRNA U3.</text>
</comment>
<comment type="subcellular location">
    <subcellularLocation>
        <location evidence="1">Nucleus</location>
        <location evidence="1">Nucleolus</location>
    </subcellularLocation>
</comment>
<comment type="similarity">
    <text evidence="3">Belongs to the UTP25 family.</text>
</comment>
<name>UTP25_CANGA</name>
<keyword id="KW-0539">Nucleus</keyword>
<keyword id="KW-1185">Reference proteome</keyword>
<keyword id="KW-0687">Ribonucleoprotein</keyword>
<keyword id="KW-0690">Ribosome biogenesis</keyword>
<keyword id="KW-0698">rRNA processing</keyword>